<evidence type="ECO:0000305" key="1"/>
<reference key="1">
    <citation type="journal article" date="1995" name="Plant Cell">
        <title>cycMs3, a novel B-type alfalfa cyclin gene, is induced in the G0-to-G1 transition of the cell cycle.</title>
        <authorList>
            <person name="Meskiene I."/>
            <person name="Boegre L."/>
            <person name="Dahl M."/>
            <person name="Pirck M."/>
            <person name="Ha D.T.C."/>
            <person name="Swoboda I."/>
            <person name="Heberle-Bors E."/>
            <person name="Ammerer G."/>
            <person name="Hirt H."/>
        </authorList>
    </citation>
    <scope>NUCLEOTIDE SEQUENCE [MRNA]</scope>
    <source>
        <strain>cv. A2</strain>
    </source>
</reference>
<protein>
    <recommendedName>
        <fullName>G2/mitotic-specific cyclin-2</fullName>
    </recommendedName>
    <alternativeName>
        <fullName>B-like cyclin</fullName>
    </alternativeName>
    <alternativeName>
        <fullName>CycMs2</fullName>
    </alternativeName>
</protein>
<organism>
    <name type="scientific">Medicago sativa subsp. varia</name>
    <name type="common">Alfalfa</name>
    <name type="synonym">Medicago varia</name>
    <dbReference type="NCBI Taxonomy" id="36902"/>
    <lineage>
        <taxon>Eukaryota</taxon>
        <taxon>Viridiplantae</taxon>
        <taxon>Streptophyta</taxon>
        <taxon>Embryophyta</taxon>
        <taxon>Tracheophyta</taxon>
        <taxon>Spermatophyta</taxon>
        <taxon>Magnoliopsida</taxon>
        <taxon>eudicotyledons</taxon>
        <taxon>Gunneridae</taxon>
        <taxon>Pentapetalae</taxon>
        <taxon>rosids</taxon>
        <taxon>fabids</taxon>
        <taxon>Fabales</taxon>
        <taxon>Fabaceae</taxon>
        <taxon>Papilionoideae</taxon>
        <taxon>50 kb inversion clade</taxon>
        <taxon>NPAAA clade</taxon>
        <taxon>Hologalegina</taxon>
        <taxon>IRL clade</taxon>
        <taxon>Trifolieae</taxon>
        <taxon>Medicago</taxon>
    </lineage>
</organism>
<keyword id="KW-0131">Cell cycle</keyword>
<keyword id="KW-0132">Cell division</keyword>
<keyword id="KW-0195">Cyclin</keyword>
<keyword id="KW-0498">Mitosis</keyword>
<dbReference type="EMBL" id="X82040">
    <property type="protein sequence ID" value="CAA57560.1"/>
    <property type="molecule type" value="mRNA"/>
</dbReference>
<dbReference type="PIR" id="T09706">
    <property type="entry name" value="T09706"/>
</dbReference>
<dbReference type="SMR" id="P46278"/>
<dbReference type="GO" id="GO:0016538">
    <property type="term" value="F:cyclin-dependent protein serine/threonine kinase regulator activity"/>
    <property type="evidence" value="ECO:0007669"/>
    <property type="project" value="InterPro"/>
</dbReference>
<dbReference type="GO" id="GO:0051301">
    <property type="term" value="P:cell division"/>
    <property type="evidence" value="ECO:0007669"/>
    <property type="project" value="UniProtKB-KW"/>
</dbReference>
<dbReference type="GO" id="GO:0044772">
    <property type="term" value="P:mitotic cell cycle phase transition"/>
    <property type="evidence" value="ECO:0007669"/>
    <property type="project" value="InterPro"/>
</dbReference>
<dbReference type="CDD" id="cd20567">
    <property type="entry name" value="CYCLIN_AtCycB-like_rpt1"/>
    <property type="match status" value="1"/>
</dbReference>
<dbReference type="CDD" id="cd20511">
    <property type="entry name" value="CYCLIN_AtCycB-like_rpt2"/>
    <property type="match status" value="1"/>
</dbReference>
<dbReference type="FunFam" id="1.10.472.10:FF:000032">
    <property type="entry name" value="G2/mitotic-specific cyclin-1"/>
    <property type="match status" value="1"/>
</dbReference>
<dbReference type="Gene3D" id="1.10.472.10">
    <property type="entry name" value="Cyclin-like"/>
    <property type="match status" value="2"/>
</dbReference>
<dbReference type="InterPro" id="IPR039361">
    <property type="entry name" value="Cyclin"/>
</dbReference>
<dbReference type="InterPro" id="IPR013763">
    <property type="entry name" value="Cyclin-like_dom"/>
</dbReference>
<dbReference type="InterPro" id="IPR036915">
    <property type="entry name" value="Cyclin-like_sf"/>
</dbReference>
<dbReference type="InterPro" id="IPR046965">
    <property type="entry name" value="Cyclin_A/B-like"/>
</dbReference>
<dbReference type="InterPro" id="IPR004367">
    <property type="entry name" value="Cyclin_C-dom"/>
</dbReference>
<dbReference type="InterPro" id="IPR006671">
    <property type="entry name" value="Cyclin_N"/>
</dbReference>
<dbReference type="InterPro" id="IPR048258">
    <property type="entry name" value="Cyclins_cyclin-box"/>
</dbReference>
<dbReference type="PANTHER" id="PTHR10177">
    <property type="entry name" value="CYCLINS"/>
    <property type="match status" value="1"/>
</dbReference>
<dbReference type="Pfam" id="PF02984">
    <property type="entry name" value="Cyclin_C"/>
    <property type="match status" value="1"/>
</dbReference>
<dbReference type="Pfam" id="PF00134">
    <property type="entry name" value="Cyclin_N"/>
    <property type="match status" value="1"/>
</dbReference>
<dbReference type="PIRSF" id="PIRSF001771">
    <property type="entry name" value="Cyclin_A_B_D_E"/>
    <property type="match status" value="1"/>
</dbReference>
<dbReference type="SMART" id="SM00385">
    <property type="entry name" value="CYCLIN"/>
    <property type="match status" value="2"/>
</dbReference>
<dbReference type="SMART" id="SM01332">
    <property type="entry name" value="Cyclin_C"/>
    <property type="match status" value="1"/>
</dbReference>
<dbReference type="SUPFAM" id="SSF47954">
    <property type="entry name" value="Cyclin-like"/>
    <property type="match status" value="2"/>
</dbReference>
<dbReference type="PROSITE" id="PS00292">
    <property type="entry name" value="CYCLINS"/>
    <property type="match status" value="1"/>
</dbReference>
<sequence>MVNTSEENNSNAVMPRKFQGGMNQVGHGGGRIVGQNRRALGGINQNFVHGRPYPCVVHKRVLSEKHEICEKKQADLGHRPITRRFAAKIAGSQQSYAEKTKNSNPLNLNEFGNSIAIDDELKSPEDQPEPMTLEHTEPMHSDPLEMEEVEMEDIEGEMILDIDSCDANNSLAVVEYIEDLHAYYRKIEYLGCVSPTYMDEQLDLNERMRAILVDWLIEVHDKFDLMQETLFLTVNLIDRFLAKQNVVRKKLQLVGLVAMLLACKYEEVSVPVVSDLIHIADRAYTRKDILEMEKLMLNTLQYNMSLPTAYVFMRRFLKAAQADKKLELVAFFLVDLSLVEYEMLKFPPSLVAAAAVYTAQCTVSGFKHWNKTCEWHTNYSEDQLLECSMLMVGFHQKAGAGKLTGVHRKYGSAKFSFTAKCEPACFLLENKNQP</sequence>
<accession>P46278</accession>
<proteinExistence type="evidence at transcript level"/>
<comment type="function">
    <text>Essential for the control of the cell cycle at the G2/M (mitosis) transition.</text>
</comment>
<comment type="subunit">
    <text>Interacts with the CDC2 protein kinase to form a serine/threonine kinase holoenzyme complex also known as maturation promoting factor (MPF). The cyclin subunit imparts substrate specificity to the complex.</text>
</comment>
<comment type="developmental stage">
    <text>Accumulates steadily during G2 and is abruptly destroyed at mitosis.</text>
</comment>
<comment type="similarity">
    <text evidence="1">Belongs to the cyclin family. Cyclin AB subfamily.</text>
</comment>
<name>CCNB2_MEDSV</name>
<feature type="chain" id="PRO_0000080395" description="G2/mitotic-specific cyclin-2">
    <location>
        <begin position="1"/>
        <end position="434"/>
    </location>
</feature>